<dbReference type="EC" id="7.4.2.11" evidence="1"/>
<dbReference type="EMBL" id="AE017220">
    <property type="protein sequence ID" value="AAX64152.1"/>
    <property type="status" value="ALT_INIT"/>
    <property type="molecule type" value="Genomic_DNA"/>
</dbReference>
<dbReference type="SMR" id="Q57T09"/>
<dbReference type="KEGG" id="sec:SCH_0246"/>
<dbReference type="HOGENOM" id="CLU_000604_1_3_6"/>
<dbReference type="Proteomes" id="UP000000538">
    <property type="component" value="Chromosome"/>
</dbReference>
<dbReference type="GO" id="GO:0009276">
    <property type="term" value="C:Gram-negative-bacterium-type cell wall"/>
    <property type="evidence" value="ECO:0007669"/>
    <property type="project" value="InterPro"/>
</dbReference>
<dbReference type="GO" id="GO:0005886">
    <property type="term" value="C:plasma membrane"/>
    <property type="evidence" value="ECO:0007669"/>
    <property type="project" value="UniProtKB-SubCell"/>
</dbReference>
<dbReference type="GO" id="GO:0033232">
    <property type="term" value="F:ABC-type D-methionine transporter activity"/>
    <property type="evidence" value="ECO:0007669"/>
    <property type="project" value="UniProtKB-EC"/>
</dbReference>
<dbReference type="GO" id="GO:0005524">
    <property type="term" value="F:ATP binding"/>
    <property type="evidence" value="ECO:0007669"/>
    <property type="project" value="UniProtKB-KW"/>
</dbReference>
<dbReference type="GO" id="GO:0016887">
    <property type="term" value="F:ATP hydrolysis activity"/>
    <property type="evidence" value="ECO:0007669"/>
    <property type="project" value="InterPro"/>
</dbReference>
<dbReference type="CDD" id="cd03258">
    <property type="entry name" value="ABC_MetN_methionine_transporter"/>
    <property type="match status" value="1"/>
</dbReference>
<dbReference type="FunFam" id="3.30.70.260:FF:000014">
    <property type="entry name" value="Methionine import ATP-binding protein MetN"/>
    <property type="match status" value="1"/>
</dbReference>
<dbReference type="FunFam" id="3.40.50.300:FF:000233">
    <property type="entry name" value="Methionine import ATP-binding protein MetN"/>
    <property type="match status" value="1"/>
</dbReference>
<dbReference type="Gene3D" id="3.30.70.260">
    <property type="match status" value="1"/>
</dbReference>
<dbReference type="Gene3D" id="3.40.50.300">
    <property type="entry name" value="P-loop containing nucleotide triphosphate hydrolases"/>
    <property type="match status" value="1"/>
</dbReference>
<dbReference type="InterPro" id="IPR003593">
    <property type="entry name" value="AAA+_ATPase"/>
</dbReference>
<dbReference type="InterPro" id="IPR012692">
    <property type="entry name" value="ABC_MetN_proteobac"/>
</dbReference>
<dbReference type="InterPro" id="IPR003439">
    <property type="entry name" value="ABC_transporter-like_ATP-bd"/>
</dbReference>
<dbReference type="InterPro" id="IPR017871">
    <property type="entry name" value="ABC_transporter-like_CS"/>
</dbReference>
<dbReference type="InterPro" id="IPR045865">
    <property type="entry name" value="ACT-like_dom_sf"/>
</dbReference>
<dbReference type="InterPro" id="IPR041701">
    <property type="entry name" value="MetN_ABC"/>
</dbReference>
<dbReference type="InterPro" id="IPR050086">
    <property type="entry name" value="MetN_ABC_transporter-like"/>
</dbReference>
<dbReference type="InterPro" id="IPR018449">
    <property type="entry name" value="NIL_domain"/>
</dbReference>
<dbReference type="InterPro" id="IPR027417">
    <property type="entry name" value="P-loop_NTPase"/>
</dbReference>
<dbReference type="NCBIfam" id="TIGR02314">
    <property type="entry name" value="ABC_MetN"/>
    <property type="match status" value="1"/>
</dbReference>
<dbReference type="PANTHER" id="PTHR43166">
    <property type="entry name" value="AMINO ACID IMPORT ATP-BINDING PROTEIN"/>
    <property type="match status" value="1"/>
</dbReference>
<dbReference type="PANTHER" id="PTHR43166:SF30">
    <property type="entry name" value="METHIONINE IMPORT ATP-BINDING PROTEIN METN"/>
    <property type="match status" value="1"/>
</dbReference>
<dbReference type="Pfam" id="PF00005">
    <property type="entry name" value="ABC_tran"/>
    <property type="match status" value="1"/>
</dbReference>
<dbReference type="Pfam" id="PF09383">
    <property type="entry name" value="NIL"/>
    <property type="match status" value="1"/>
</dbReference>
<dbReference type="SMART" id="SM00382">
    <property type="entry name" value="AAA"/>
    <property type="match status" value="1"/>
</dbReference>
<dbReference type="SMART" id="SM00930">
    <property type="entry name" value="NIL"/>
    <property type="match status" value="1"/>
</dbReference>
<dbReference type="SUPFAM" id="SSF55021">
    <property type="entry name" value="ACT-like"/>
    <property type="match status" value="1"/>
</dbReference>
<dbReference type="SUPFAM" id="SSF52540">
    <property type="entry name" value="P-loop containing nucleoside triphosphate hydrolases"/>
    <property type="match status" value="1"/>
</dbReference>
<dbReference type="PROSITE" id="PS00211">
    <property type="entry name" value="ABC_TRANSPORTER_1"/>
    <property type="match status" value="1"/>
</dbReference>
<dbReference type="PROSITE" id="PS50893">
    <property type="entry name" value="ABC_TRANSPORTER_2"/>
    <property type="match status" value="1"/>
</dbReference>
<dbReference type="PROSITE" id="PS51264">
    <property type="entry name" value="METN"/>
    <property type="match status" value="1"/>
</dbReference>
<comment type="function">
    <text evidence="1">Part of the ABC transporter complex MetNIQ involved in methionine import. Responsible for energy coupling to the transport system.</text>
</comment>
<comment type="catalytic activity">
    <reaction evidence="1">
        <text>L-methionine(out) + ATP + H2O = L-methionine(in) + ADP + phosphate + H(+)</text>
        <dbReference type="Rhea" id="RHEA:29779"/>
        <dbReference type="ChEBI" id="CHEBI:15377"/>
        <dbReference type="ChEBI" id="CHEBI:15378"/>
        <dbReference type="ChEBI" id="CHEBI:30616"/>
        <dbReference type="ChEBI" id="CHEBI:43474"/>
        <dbReference type="ChEBI" id="CHEBI:57844"/>
        <dbReference type="ChEBI" id="CHEBI:456216"/>
        <dbReference type="EC" id="7.4.2.11"/>
    </reaction>
</comment>
<comment type="catalytic activity">
    <reaction evidence="1">
        <text>D-methionine(out) + ATP + H2O = D-methionine(in) + ADP + phosphate + H(+)</text>
        <dbReference type="Rhea" id="RHEA:29767"/>
        <dbReference type="ChEBI" id="CHEBI:15377"/>
        <dbReference type="ChEBI" id="CHEBI:15378"/>
        <dbReference type="ChEBI" id="CHEBI:30616"/>
        <dbReference type="ChEBI" id="CHEBI:43474"/>
        <dbReference type="ChEBI" id="CHEBI:57932"/>
        <dbReference type="ChEBI" id="CHEBI:456216"/>
        <dbReference type="EC" id="7.4.2.11"/>
    </reaction>
</comment>
<comment type="subunit">
    <text evidence="1">The complex is composed of two ATP-binding proteins (MetN), two transmembrane proteins (MetI) and a solute-binding protein (MetQ).</text>
</comment>
<comment type="subcellular location">
    <subcellularLocation>
        <location evidence="1">Cell inner membrane</location>
        <topology evidence="1">Peripheral membrane protein</topology>
    </subcellularLocation>
</comment>
<comment type="similarity">
    <text evidence="1">Belongs to the ABC transporter superfamily. Methionine importer (TC 3.A.1.24) family.</text>
</comment>
<comment type="sequence caution" evidence="2">
    <conflict type="erroneous initiation">
        <sequence resource="EMBL-CDS" id="AAX64152"/>
    </conflict>
</comment>
<keyword id="KW-0029">Amino-acid transport</keyword>
<keyword id="KW-0067">ATP-binding</keyword>
<keyword id="KW-0997">Cell inner membrane</keyword>
<keyword id="KW-1003">Cell membrane</keyword>
<keyword id="KW-0472">Membrane</keyword>
<keyword id="KW-0547">Nucleotide-binding</keyword>
<keyword id="KW-1278">Translocase</keyword>
<keyword id="KW-0813">Transport</keyword>
<name>METN1_SALCH</name>
<protein>
    <recommendedName>
        <fullName evidence="1">Methionine import ATP-binding protein MetN 1</fullName>
        <ecNumber evidence="1">7.4.2.11</ecNumber>
    </recommendedName>
</protein>
<feature type="chain" id="PRO_0000270375" description="Methionine import ATP-binding protein MetN 1">
    <location>
        <begin position="1"/>
        <end position="343"/>
    </location>
</feature>
<feature type="domain" description="ABC transporter" evidence="1">
    <location>
        <begin position="2"/>
        <end position="241"/>
    </location>
</feature>
<feature type="binding site" evidence="1">
    <location>
        <begin position="38"/>
        <end position="45"/>
    </location>
    <ligand>
        <name>ATP</name>
        <dbReference type="ChEBI" id="CHEBI:30616"/>
    </ligand>
</feature>
<organism>
    <name type="scientific">Salmonella choleraesuis (strain SC-B67)</name>
    <dbReference type="NCBI Taxonomy" id="321314"/>
    <lineage>
        <taxon>Bacteria</taxon>
        <taxon>Pseudomonadati</taxon>
        <taxon>Pseudomonadota</taxon>
        <taxon>Gammaproteobacteria</taxon>
        <taxon>Enterobacterales</taxon>
        <taxon>Enterobacteriaceae</taxon>
        <taxon>Salmonella</taxon>
    </lineage>
</organism>
<accession>Q57T09</accession>
<reference key="1">
    <citation type="journal article" date="2005" name="Nucleic Acids Res.">
        <title>The genome sequence of Salmonella enterica serovar Choleraesuis, a highly invasive and resistant zoonotic pathogen.</title>
        <authorList>
            <person name="Chiu C.-H."/>
            <person name="Tang P."/>
            <person name="Chu C."/>
            <person name="Hu S."/>
            <person name="Bao Q."/>
            <person name="Yu J."/>
            <person name="Chou Y.-Y."/>
            <person name="Wang H.-S."/>
            <person name="Lee Y.-S."/>
        </authorList>
    </citation>
    <scope>NUCLEOTIDE SEQUENCE [LARGE SCALE GENOMIC DNA]</scope>
    <source>
        <strain>SC-B67</strain>
    </source>
</reference>
<evidence type="ECO:0000255" key="1">
    <source>
        <dbReference type="HAMAP-Rule" id="MF_01719"/>
    </source>
</evidence>
<evidence type="ECO:0000305" key="2"/>
<gene>
    <name evidence="1" type="primary">metN1</name>
    <name type="ordered locus">SCH_0246</name>
</gene>
<proteinExistence type="inferred from homology"/>
<sequence>MIKLSNITKVFQQGARTIQALNNVSLHVPAGQIYGVIGASGAGKSTLIRCVNLLERPTEGSVQVGGQELTTLSESELTKARRQIGMIFQHFNLLSSRTVFGNVALPLELDNTPKEEIKRRVTELLDLVGLGDKHDSYPANLSGGQKQRVAIARALASNPKVLLCDEATSALDPATTRSILELLKDINRRLGLTILLITHEMDVVKRICDCVAVISNGELIEQDTVSEVFSHPKTPLAQKFIQSTLHLDIPEDYQARLKASPETDSVPMLRMEFTGQSVDAPLLSETARRFNVNNNIISAQMDYAGGVKFGIMLTEMHGTQEETQAAIAWLQDHHVKVEVLGYV</sequence>